<sequence length="200" mass="22541">MAKKTYDLLFKLLLIGDSGVGKTCVLFRFSDDAFNTTFISTIGIDFKIKTVELQGKKIKLQIWDTAGQERFHTITTSYYRGAMGIMLVYDITNGKSFENISKWLRNIDEHANEDVERMLLGNKCDMDDKRVVPKGKGEQIAREHGIRFFETSAKANINIEKAFLTLAEDILRKTPVKEPNSENVDISSGGGVTGWKSKCC</sequence>
<reference key="1">
    <citation type="journal article" date="2002" name="Gene Expr.">
        <title>Identification and characterization of nine novel human small GTPases showing variable expressions in liver cancer tissues.</title>
        <authorList>
            <person name="He H."/>
            <person name="Dai F.Y."/>
            <person name="Yu L."/>
            <person name="She X."/>
            <person name="Zhao Y."/>
            <person name="Jiang J."/>
            <person name="Chen X."/>
            <person name="Zhao S.Y."/>
        </authorList>
    </citation>
    <scope>NUCLEOTIDE SEQUENCE [MRNA]</scope>
</reference>
<reference key="2">
    <citation type="submission" date="2000-08" db="EMBL/GenBank/DDBJ databases">
        <authorList>
            <person name="Wong K."/>
            <person name="Hong W."/>
            <person name="Tang B."/>
        </authorList>
    </citation>
    <scope>NUCLEOTIDE SEQUENCE [MRNA]</scope>
</reference>
<reference key="3">
    <citation type="journal article" date="2000" name="Proc. Natl. Acad. Sci. U.S.A.">
        <title>Gene expression profiling in the human hypothalamus-pituitary-adrenal axis and full-length cDNA cloning.</title>
        <authorList>
            <person name="Hu R.-M."/>
            <person name="Han Z.-G."/>
            <person name="Song H.-D."/>
            <person name="Peng Y.-D."/>
            <person name="Huang Q.-H."/>
            <person name="Ren S.-X."/>
            <person name="Gu Y.-J."/>
            <person name="Huang C.-H."/>
            <person name="Li Y.-B."/>
            <person name="Jiang C.-L."/>
            <person name="Fu G."/>
            <person name="Zhang Q.-H."/>
            <person name="Gu B.-W."/>
            <person name="Dai M."/>
            <person name="Mao Y.-F."/>
            <person name="Gao G.-F."/>
            <person name="Rong R."/>
            <person name="Ye M."/>
            <person name="Zhou J."/>
            <person name="Xu S.-H."/>
            <person name="Gu J."/>
            <person name="Shi J.-X."/>
            <person name="Jin W.-R."/>
            <person name="Zhang C.-K."/>
            <person name="Wu T.-M."/>
            <person name="Huang G.-Y."/>
            <person name="Chen Z."/>
            <person name="Chen M.-D."/>
            <person name="Chen J.-L."/>
        </authorList>
    </citation>
    <scope>NUCLEOTIDE SEQUENCE [LARGE SCALE MRNA]</scope>
    <source>
        <tissue>Pituitary</tissue>
    </source>
</reference>
<reference key="4">
    <citation type="journal article" date="2001" name="Genome Res.">
        <title>Towards a catalog of human genes and proteins: sequencing and analysis of 500 novel complete protein coding human cDNAs.</title>
        <authorList>
            <person name="Wiemann S."/>
            <person name="Weil B."/>
            <person name="Wellenreuther R."/>
            <person name="Gassenhuber J."/>
            <person name="Glassl S."/>
            <person name="Ansorge W."/>
            <person name="Boecher M."/>
            <person name="Bloecker H."/>
            <person name="Bauersachs S."/>
            <person name="Blum H."/>
            <person name="Lauber J."/>
            <person name="Duesterhoeft A."/>
            <person name="Beyer A."/>
            <person name="Koehrer K."/>
            <person name="Strack N."/>
            <person name="Mewes H.-W."/>
            <person name="Ottenwaelder B."/>
            <person name="Obermaier B."/>
            <person name="Tampe J."/>
            <person name="Heubner D."/>
            <person name="Wambutt R."/>
            <person name="Korn B."/>
            <person name="Klein M."/>
            <person name="Poustka A."/>
        </authorList>
    </citation>
    <scope>NUCLEOTIDE SEQUENCE [LARGE SCALE MRNA]</scope>
    <source>
        <tissue>Brain</tissue>
    </source>
</reference>
<reference key="5">
    <citation type="journal article" date="2004" name="Nat. Genet.">
        <title>Complete sequencing and characterization of 21,243 full-length human cDNAs.</title>
        <authorList>
            <person name="Ota T."/>
            <person name="Suzuki Y."/>
            <person name="Nishikawa T."/>
            <person name="Otsuki T."/>
            <person name="Sugiyama T."/>
            <person name="Irie R."/>
            <person name="Wakamatsu A."/>
            <person name="Hayashi K."/>
            <person name="Sato H."/>
            <person name="Nagai K."/>
            <person name="Kimura K."/>
            <person name="Makita H."/>
            <person name="Sekine M."/>
            <person name="Obayashi M."/>
            <person name="Nishi T."/>
            <person name="Shibahara T."/>
            <person name="Tanaka T."/>
            <person name="Ishii S."/>
            <person name="Yamamoto J."/>
            <person name="Saito K."/>
            <person name="Kawai Y."/>
            <person name="Isono Y."/>
            <person name="Nakamura Y."/>
            <person name="Nagahari K."/>
            <person name="Murakami K."/>
            <person name="Yasuda T."/>
            <person name="Iwayanagi T."/>
            <person name="Wagatsuma M."/>
            <person name="Shiratori A."/>
            <person name="Sudo H."/>
            <person name="Hosoiri T."/>
            <person name="Kaku Y."/>
            <person name="Kodaira H."/>
            <person name="Kondo H."/>
            <person name="Sugawara M."/>
            <person name="Takahashi M."/>
            <person name="Kanda K."/>
            <person name="Yokoi T."/>
            <person name="Furuya T."/>
            <person name="Kikkawa E."/>
            <person name="Omura Y."/>
            <person name="Abe K."/>
            <person name="Kamihara K."/>
            <person name="Katsuta N."/>
            <person name="Sato K."/>
            <person name="Tanikawa M."/>
            <person name="Yamazaki M."/>
            <person name="Ninomiya K."/>
            <person name="Ishibashi T."/>
            <person name="Yamashita H."/>
            <person name="Murakawa K."/>
            <person name="Fujimori K."/>
            <person name="Tanai H."/>
            <person name="Kimata M."/>
            <person name="Watanabe M."/>
            <person name="Hiraoka S."/>
            <person name="Chiba Y."/>
            <person name="Ishida S."/>
            <person name="Ono Y."/>
            <person name="Takiguchi S."/>
            <person name="Watanabe S."/>
            <person name="Yosida M."/>
            <person name="Hotuta T."/>
            <person name="Kusano J."/>
            <person name="Kanehori K."/>
            <person name="Takahashi-Fujii A."/>
            <person name="Hara H."/>
            <person name="Tanase T.-O."/>
            <person name="Nomura Y."/>
            <person name="Togiya S."/>
            <person name="Komai F."/>
            <person name="Hara R."/>
            <person name="Takeuchi K."/>
            <person name="Arita M."/>
            <person name="Imose N."/>
            <person name="Musashino K."/>
            <person name="Yuuki H."/>
            <person name="Oshima A."/>
            <person name="Sasaki N."/>
            <person name="Aotsuka S."/>
            <person name="Yoshikawa Y."/>
            <person name="Matsunawa H."/>
            <person name="Ichihara T."/>
            <person name="Shiohata N."/>
            <person name="Sano S."/>
            <person name="Moriya S."/>
            <person name="Momiyama H."/>
            <person name="Satoh N."/>
            <person name="Takami S."/>
            <person name="Terashima Y."/>
            <person name="Suzuki O."/>
            <person name="Nakagawa S."/>
            <person name="Senoh A."/>
            <person name="Mizoguchi H."/>
            <person name="Goto Y."/>
            <person name="Shimizu F."/>
            <person name="Wakebe H."/>
            <person name="Hishigaki H."/>
            <person name="Watanabe T."/>
            <person name="Sugiyama A."/>
            <person name="Takemoto M."/>
            <person name="Kawakami B."/>
            <person name="Yamazaki M."/>
            <person name="Watanabe K."/>
            <person name="Kumagai A."/>
            <person name="Itakura S."/>
            <person name="Fukuzumi Y."/>
            <person name="Fujimori Y."/>
            <person name="Komiyama M."/>
            <person name="Tashiro H."/>
            <person name="Tanigami A."/>
            <person name="Fujiwara T."/>
            <person name="Ono T."/>
            <person name="Yamada K."/>
            <person name="Fujii Y."/>
            <person name="Ozaki K."/>
            <person name="Hirao M."/>
            <person name="Ohmori Y."/>
            <person name="Kawabata A."/>
            <person name="Hikiji T."/>
            <person name="Kobatake N."/>
            <person name="Inagaki H."/>
            <person name="Ikema Y."/>
            <person name="Okamoto S."/>
            <person name="Okitani R."/>
            <person name="Kawakami T."/>
            <person name="Noguchi S."/>
            <person name="Itoh T."/>
            <person name="Shigeta K."/>
            <person name="Senba T."/>
            <person name="Matsumura K."/>
            <person name="Nakajima Y."/>
            <person name="Mizuno T."/>
            <person name="Morinaga M."/>
            <person name="Sasaki M."/>
            <person name="Togashi T."/>
            <person name="Oyama M."/>
            <person name="Hata H."/>
            <person name="Watanabe M."/>
            <person name="Komatsu T."/>
            <person name="Mizushima-Sugano J."/>
            <person name="Satoh T."/>
            <person name="Shirai Y."/>
            <person name="Takahashi Y."/>
            <person name="Nakagawa K."/>
            <person name="Okumura K."/>
            <person name="Nagase T."/>
            <person name="Nomura N."/>
            <person name="Kikuchi H."/>
            <person name="Masuho Y."/>
            <person name="Yamashita R."/>
            <person name="Nakai K."/>
            <person name="Yada T."/>
            <person name="Nakamura Y."/>
            <person name="Ohara O."/>
            <person name="Isogai T."/>
            <person name="Sugano S."/>
        </authorList>
    </citation>
    <scope>NUCLEOTIDE SEQUENCE [LARGE SCALE MRNA]</scope>
</reference>
<reference key="6">
    <citation type="submission" date="2002-04" db="EMBL/GenBank/DDBJ databases">
        <title>cDNA clones of human proteins involved in signal transduction sequenced by the Guthrie cDNA resource center (www.cdna.org).</title>
        <authorList>
            <person name="Puhl H.L. III"/>
            <person name="Ikeda S.R."/>
            <person name="Aronstam R.S."/>
        </authorList>
    </citation>
    <scope>NUCLEOTIDE SEQUENCE [LARGE SCALE MRNA]</scope>
    <source>
        <tissue>Brain</tissue>
    </source>
</reference>
<reference key="7">
    <citation type="submission" date="2004-06" db="EMBL/GenBank/DDBJ databases">
        <title>Cloning of human full open reading frames in Gateway(TM) system entry vector (pDONR201).</title>
        <authorList>
            <person name="Ebert L."/>
            <person name="Schick M."/>
            <person name="Neubert P."/>
            <person name="Schatten R."/>
            <person name="Henze S."/>
            <person name="Korn B."/>
        </authorList>
    </citation>
    <scope>NUCLEOTIDE SEQUENCE [LARGE SCALE MRNA]</scope>
</reference>
<reference key="8">
    <citation type="submission" date="2005-09" db="EMBL/GenBank/DDBJ databases">
        <authorList>
            <person name="Mural R.J."/>
            <person name="Istrail S."/>
            <person name="Sutton G.G."/>
            <person name="Florea L."/>
            <person name="Halpern A.L."/>
            <person name="Mobarry C.M."/>
            <person name="Lippert R."/>
            <person name="Walenz B."/>
            <person name="Shatkay H."/>
            <person name="Dew I."/>
            <person name="Miller J.R."/>
            <person name="Flanigan M.J."/>
            <person name="Edwards N.J."/>
            <person name="Bolanos R."/>
            <person name="Fasulo D."/>
            <person name="Halldorsson B.V."/>
            <person name="Hannenhalli S."/>
            <person name="Turner R."/>
            <person name="Yooseph S."/>
            <person name="Lu F."/>
            <person name="Nusskern D.R."/>
            <person name="Shue B.C."/>
            <person name="Zheng X.H."/>
            <person name="Zhong F."/>
            <person name="Delcher A.L."/>
            <person name="Huson D.H."/>
            <person name="Kravitz S.A."/>
            <person name="Mouchard L."/>
            <person name="Reinert K."/>
            <person name="Remington K.A."/>
            <person name="Clark A.G."/>
            <person name="Waterman M.S."/>
            <person name="Eichler E.E."/>
            <person name="Adams M.D."/>
            <person name="Hunkapiller M.W."/>
            <person name="Myers E.W."/>
            <person name="Venter J.C."/>
        </authorList>
    </citation>
    <scope>NUCLEOTIDE SEQUENCE [LARGE SCALE GENOMIC DNA]</scope>
</reference>
<reference key="9">
    <citation type="journal article" date="2004" name="Genome Res.">
        <title>The status, quality, and expansion of the NIH full-length cDNA project: the Mammalian Gene Collection (MGC).</title>
        <authorList>
            <consortium name="The MGC Project Team"/>
        </authorList>
    </citation>
    <scope>NUCLEOTIDE SEQUENCE [LARGE SCALE MRNA]</scope>
    <source>
        <tissue>Cervix</tissue>
    </source>
</reference>
<reference key="10">
    <citation type="journal article" date="2006" name="Mol. Biol. Cell">
        <title>Rab10 regulates membrane transport through early endosomes of polarized Madin-Darby canine kidney cells.</title>
        <authorList>
            <person name="Babbey C.M."/>
            <person name="Ahktar N."/>
            <person name="Wang E."/>
            <person name="Chen C.C."/>
            <person name="Grant B.D."/>
            <person name="Dunn K.W."/>
        </authorList>
    </citation>
    <scope>FUNCTION</scope>
    <scope>SUBCELLULAR LOCATION</scope>
</reference>
<reference key="11">
    <citation type="journal article" date="2009" name="Biochem. J.">
        <title>GDI-1 preferably interacts with Rab10 in insulin-stimulated GLUT4 translocation.</title>
        <authorList>
            <person name="Chen Y."/>
            <person name="Deng Y."/>
            <person name="Zhang J."/>
            <person name="Yang L."/>
            <person name="Xie X."/>
            <person name="Xu T."/>
        </authorList>
    </citation>
    <scope>INTERACTION WITH GDI1 AND GDI2</scope>
    <scope>ACTIVITY REGULATION</scope>
</reference>
<reference key="12">
    <citation type="journal article" date="2009" name="Science">
        <title>Lysine acetylation targets protein complexes and co-regulates major cellular functions.</title>
        <authorList>
            <person name="Choudhary C."/>
            <person name="Kumar C."/>
            <person name="Gnad F."/>
            <person name="Nielsen M.L."/>
            <person name="Rehman M."/>
            <person name="Walther T.C."/>
            <person name="Olsen J.V."/>
            <person name="Mann M."/>
        </authorList>
    </citation>
    <scope>ACETYLATION [LARGE SCALE ANALYSIS] AT LYS-102</scope>
    <scope>IDENTIFICATION BY MASS SPECTROMETRY [LARGE SCALE ANALYSIS]</scope>
</reference>
<reference key="13">
    <citation type="journal article" date="2010" name="Am. J. Physiol.">
        <title>Rab10 associates with primary cilia and the exocyst complex in renal epithelial cells.</title>
        <authorList>
            <person name="Babbey C.M."/>
            <person name="Bacallao R.L."/>
            <person name="Dunn K.W."/>
        </authorList>
    </citation>
    <scope>SUBCELLULAR LOCATION</scope>
    <scope>MUTAGENESIS OF THR-23 AND GLN-68</scope>
</reference>
<reference key="14">
    <citation type="journal article" date="2010" name="J. Cell Biol.">
        <title>Family-wide characterization of the DENN domain Rab GDP-GTP exchange factors.</title>
        <authorList>
            <person name="Yoshimura S."/>
            <person name="Gerondopoulos A."/>
            <person name="Linford A."/>
            <person name="Rigden D.J."/>
            <person name="Barr F.A."/>
        </authorList>
    </citation>
    <scope>ACTIVITY REGULATION</scope>
    <scope>CATALYTIC ACTIVITY</scope>
</reference>
<reference key="15">
    <citation type="journal article" date="2011" name="BMC Syst. Biol.">
        <title>Initial characterization of the human central proteome.</title>
        <authorList>
            <person name="Burkard T.R."/>
            <person name="Planyavsky M."/>
            <person name="Kaupe I."/>
            <person name="Breitwieser F.P."/>
            <person name="Buerckstuemmer T."/>
            <person name="Bennett K.L."/>
            <person name="Superti-Furga G."/>
            <person name="Colinge J."/>
        </authorList>
    </citation>
    <scope>IDENTIFICATION BY MASS SPECTROMETRY [LARGE SCALE ANALYSIS]</scope>
</reference>
<reference key="16">
    <citation type="journal article" date="2011" name="Physiol. Rev.">
        <title>Role of Rab GTPases in membrane traffic and cell physiology.</title>
        <authorList>
            <person name="Hutagalung A.H."/>
            <person name="Novick P.J."/>
        </authorList>
    </citation>
    <scope>FUNCTION</scope>
</reference>
<reference key="17">
    <citation type="journal article" date="2012" name="J. Cell Biol.">
        <title>Rab10 and myosin-Va mediate insulin-stimulated GLUT4 storage vesicle translocation in adipocytes.</title>
        <authorList>
            <person name="Chen Y."/>
            <person name="Wang Y."/>
            <person name="Zhang J."/>
            <person name="Deng Y."/>
            <person name="Jiang L."/>
            <person name="Song E."/>
            <person name="Wu X.S."/>
            <person name="Hammer J.A."/>
            <person name="Xu T."/>
            <person name="Lippincott-Schwartz J."/>
        </authorList>
    </citation>
    <scope>SUBCELLULAR LOCATION</scope>
    <scope>INTERACTION WITH MYO5A</scope>
</reference>
<reference key="18">
    <citation type="journal article" date="2013" name="Nat. Cell Biol.">
        <title>Rab10 GTPase regulates ER dynamics and morphology.</title>
        <authorList>
            <person name="English A.R."/>
            <person name="Voeltz G.K."/>
        </authorList>
    </citation>
    <scope>FUNCTION IN ENDOPLASMIC RETICULUM MEMBRANE DYNAMICS</scope>
    <scope>SUBCELLULAR LOCATION</scope>
    <scope>MUTAGENESIS OF THR-23</scope>
</reference>
<reference key="19">
    <citation type="journal article" date="2014" name="J. Cell Biol.">
        <title>Rab18 and a Rab18 GEF complex are required for normal ER structure.</title>
        <authorList>
            <person name="Gerondopoulos A."/>
            <person name="Bastos R.N."/>
            <person name="Yoshimura S."/>
            <person name="Anderson R."/>
            <person name="Carpanini S."/>
            <person name="Aligianis I."/>
            <person name="Handley M.T."/>
            <person name="Barr F.A."/>
        </authorList>
    </citation>
    <scope>SUBCELLULAR LOCATION</scope>
</reference>
<reference key="20">
    <citation type="journal article" date="2015" name="Proteomics">
        <title>N-terminome analysis of the human mitochondrial proteome.</title>
        <authorList>
            <person name="Vaca Jacome A.S."/>
            <person name="Rabilloud T."/>
            <person name="Schaeffer-Reiss C."/>
            <person name="Rompais M."/>
            <person name="Ayoub D."/>
            <person name="Lane L."/>
            <person name="Bairoch A."/>
            <person name="Van Dorsselaer A."/>
            <person name="Carapito C."/>
        </authorList>
    </citation>
    <scope>IDENTIFICATION BY MASS SPECTROMETRY [LARGE SCALE ANALYSIS]</scope>
</reference>
<reference key="21">
    <citation type="journal article" date="2016" name="Elife">
        <title>Phosphoproteomics reveals that Parkinson's disease kinase LRRK2 regulates a subset of Rab GTPases.</title>
        <authorList>
            <person name="Steger M."/>
            <person name="Tonelli F."/>
            <person name="Ito G."/>
            <person name="Davies P."/>
            <person name="Trost M."/>
            <person name="Vetter M."/>
            <person name="Wachter S."/>
            <person name="Lorentzen E."/>
            <person name="Duddy G."/>
            <person name="Wilson S."/>
            <person name="Baptista M.A."/>
            <person name="Fiske B.K."/>
            <person name="Fell M.J."/>
            <person name="Morrow J.A."/>
            <person name="Reith A.D."/>
            <person name="Alessi D.R."/>
            <person name="Mann M."/>
        </authorList>
    </citation>
    <scope>INTERACTION WITH LRRK2; GDI1 AND GDI2</scope>
    <scope>PHOSPHORYLATION AT THR-73</scope>
    <scope>MUTAGENESIS OF THR-73</scope>
    <scope>ACTIVITY REGULATION</scope>
</reference>
<reference key="22">
    <citation type="journal article" date="2017" name="Elife">
        <title>Systematic proteomic analysis of LRRK2-mediated Rab GTPase phosphorylation establishes a connection to ciliogenesis.</title>
        <authorList>
            <person name="Steger M."/>
            <person name="Diez F."/>
            <person name="Dhekne H.S."/>
            <person name="Lis P."/>
            <person name="Nirujogi R.S."/>
            <person name="Karayel O."/>
            <person name="Tonelli F."/>
            <person name="Martinez T.N."/>
            <person name="Lorentzen E."/>
            <person name="Pfeffer S.R."/>
            <person name="Alessi D.R."/>
            <person name="Mann M."/>
        </authorList>
    </citation>
    <scope>INTERACTION WITH GDI1; GDI2; CHM; CHML; RILPL1 AND RILPL2</scope>
    <scope>PHOSPHORYLATION AT THR-73</scope>
    <scope>MUTAGENESIS OF THR-73</scope>
    <scope>ACTIVITY REGULATION</scope>
</reference>
<reference key="23">
    <citation type="journal article" date="2017" name="Int. J. Mol. Sci.">
        <title>RAB10 Interacts with the Male Germ Cell-Specific GTPase-Activating Protein during Mammalian Spermiogenesis.</title>
        <authorList>
            <person name="Lin Y.H."/>
            <person name="Ke C.C."/>
            <person name="Wang Y.Y."/>
            <person name="Chen M.F."/>
            <person name="Chen T.M."/>
            <person name="Ku W.C."/>
            <person name="Chiang H.S."/>
            <person name="Yeh C.H."/>
        </authorList>
    </citation>
    <scope>ACTIVITY REGULATION</scope>
    <scope>INTERACTION WITH TBC1D21</scope>
    <scope>TISSUE SPECIFICITY</scope>
</reference>
<reference key="24">
    <citation type="journal article" date="2018" name="Biochem. J.">
        <title>Interrogating Parkinson's disease LRRK2 kinase pathway activity by assessing Rab10 phosphorylation in human neutrophils.</title>
        <authorList>
            <person name="Fan Y."/>
            <person name="Howden A.J.M."/>
            <person name="Sarhan A.R."/>
            <person name="Lis P."/>
            <person name="Ito G."/>
            <person name="Martinez T.N."/>
            <person name="Brockmann K."/>
            <person name="Gasser T."/>
            <person name="Alessi D.R."/>
            <person name="Sammler E.M."/>
        </authorList>
    </citation>
    <scope>TISSUE SPECIFICITY</scope>
    <scope>PHOSPHORYLATION AT THR-73</scope>
</reference>
<reference key="25">
    <citation type="journal article" date="2018" name="Elife">
        <title>A pathway for Parkinson's Disease LRRK2 kinase to block primary cilia and Sonic hedgehog signaling in the brain.</title>
        <authorList>
            <person name="Dhekne H.S."/>
            <person name="Yanatori I."/>
            <person name="Gomez R.C."/>
            <person name="Tonelli F."/>
            <person name="Diez F."/>
            <person name="Schuele B."/>
            <person name="Steger M."/>
            <person name="Alessi D.R."/>
            <person name="Pfeffer S.R."/>
        </authorList>
    </citation>
    <scope>FUNCTION</scope>
    <scope>INTERACTION WITH RILPL1</scope>
    <scope>SUBCELLULAR LOCATION</scope>
    <scope>PHOSPHORYLATION AT THR-73</scope>
    <scope>MUTAGENESIS OF THR-73</scope>
</reference>
<reference key="26">
    <citation type="journal article" date="2018" name="EMBO J.">
        <title>Rab29 activation of the Parkinson's disease-associated LRRK2 kinase.</title>
        <authorList>
            <person name="Purlyte E."/>
            <person name="Dhekne H.S."/>
            <person name="Sarhan A.R."/>
            <person name="Gomez R."/>
            <person name="Lis P."/>
            <person name="Wightman M."/>
            <person name="Martinez T.N."/>
            <person name="Tonelli F."/>
            <person name="Pfeffer S.R."/>
            <person name="Alessi D.R."/>
        </authorList>
    </citation>
    <scope>SUBCELLULAR LOCATION</scope>
    <scope>PHOSPHORYLATION AT THR-73</scope>
</reference>
<reference key="27">
    <citation type="journal article" date="2018" name="J. Alzheimers Dis.">
        <title>Rab10 Phosphorylation is a Prominent Pathological Feature in Alzheimer's Disease.</title>
        <authorList>
            <person name="Yan T."/>
            <person name="Wang L."/>
            <person name="Gao J."/>
            <person name="Siedlak S.L."/>
            <person name="Huntley M.L."/>
            <person name="Termsarasab P."/>
            <person name="Perry G."/>
            <person name="Chen S.G."/>
            <person name="Wang X."/>
        </authorList>
    </citation>
    <scope>TISSUE SPECIFICITY</scope>
    <scope>PHOSPHORYLATION AT THR-73</scope>
</reference>
<reference evidence="27" key="28">
    <citation type="journal article" date="2018" name="Proc. Natl. Acad. Sci. U.S.A.">
        <title>LRRK2 and its substrate Rab GTPases are sequentially targeted onto stressed lysosomes and maintain their homeostasis.</title>
        <authorList>
            <person name="Eguchi T."/>
            <person name="Kuwahara T."/>
            <person name="Sakurai M."/>
            <person name="Komori T."/>
            <person name="Fujimoto T."/>
            <person name="Ito G."/>
            <person name="Yoshimura S.I."/>
            <person name="Harada A."/>
            <person name="Fukuda M."/>
            <person name="Koike M."/>
            <person name="Iwatsubo T."/>
        </authorList>
    </citation>
    <scope>FUNCTION</scope>
    <scope>SUBCELLULAR LOCATION</scope>
    <scope>PHOSPHORYLATION AT THR-73</scope>
    <scope>MUTAGENESIS OF THR-73</scope>
</reference>
<reference key="29">
    <citation type="journal article" date="2019" name="Cell Host Microbe">
        <title>Systematic Identification of Host Cell Regulators of Legionella pneumophila Pathogenesis Using a Genome-wide CRISPR Screen.</title>
        <authorList>
            <person name="Jeng E.E."/>
            <person name="Bhadkamkar V."/>
            <person name="Ibe N.U."/>
            <person name="Gause H."/>
            <person name="Jiang L."/>
            <person name="Chan J."/>
            <person name="Jian R."/>
            <person name="Jimenez-Morales D."/>
            <person name="Stevenson E."/>
            <person name="Krogan N.J."/>
            <person name="Swaney D.L."/>
            <person name="Snyder M.P."/>
            <person name="Mukherjee S."/>
            <person name="Bassik M.C."/>
        </authorList>
    </citation>
    <scope>FUNCTION (MICROBIAL INFECTION)</scope>
    <scope>ACTIVITY REGULATION</scope>
    <scope>UBIQUITINATION AT LYS-102; LYS-136 AND LYS-154</scope>
    <scope>MUTAGENESIS OF THR-23 AND GLN-68</scope>
</reference>
<reference key="30">
    <citation type="journal article" date="2019" name="Proc. Natl. Acad. Sci. U.S.A.">
        <title>Crystal structure of the WD40 domain dimer of LRRK2.</title>
        <authorList>
            <person name="Zhang P."/>
            <person name="Fan Y."/>
            <person name="Ru H."/>
            <person name="Wang L."/>
            <person name="Magupalli V.G."/>
            <person name="Taylor S.S."/>
            <person name="Alessi D.R."/>
            <person name="Wu H."/>
        </authorList>
    </citation>
    <scope>PHOSPHORYLATION AT THR-73</scope>
</reference>
<reference key="31">
    <citation type="journal article" date="2020" name="J. Cell Biol.">
        <title>GRAF2, WDR44, and MICAL1 mediate Rab8/10/11-dependent export of E-cadherin, MMP14, and CFTR DeltaF508.</title>
        <authorList>
            <person name="Lucken-Ardjomande Haesler S."/>
            <person name="Vallis Y."/>
            <person name="Pasche M."/>
            <person name="McMahon H.T."/>
        </authorList>
    </citation>
    <scope>FUNCTION</scope>
    <scope>INTERACTION WITH MICAL1</scope>
    <scope>SUBCELLULAR LOCATION</scope>
</reference>
<reference key="32">
    <citation type="journal article" date="2023" name="Science">
        <title>Rab29-dependent asymmetrical activation of leucine-rich repeat kinase 2.</title>
        <authorList>
            <person name="Zhu H."/>
            <person name="Tonelli F."/>
            <person name="Turk M."/>
            <person name="Prescott A."/>
            <person name="Alessi D.R."/>
            <person name="Sun J."/>
        </authorList>
    </citation>
    <scope>PHOSPHORYLATION AT THR-73</scope>
</reference>
<reference evidence="30 31" key="33">
    <citation type="journal article" date="2016" name="Elife">
        <title>bMERB domains are bivalent Rab8 family effectors evolved by gene duplication.</title>
        <authorList>
            <person name="Rai A."/>
            <person name="Oprisko A."/>
            <person name="Campos J."/>
            <person name="Fu Y."/>
            <person name="Friese T."/>
            <person name="Itzen A."/>
            <person name="Goody R.S."/>
            <person name="Gazdag E.M."/>
            <person name="Muller M.P."/>
        </authorList>
    </citation>
    <scope>X-RAY CRYSTALLOGRAPHY (2.66 ANGSTROMS) IN COMPLEX WITH MG(2+); GTP ANALOG AND MICALCL</scope>
    <scope>X-RAY CRYSTALLOGRAPHY (2.80 ANGSTROMS) OF 1-175 IN COMPLEX WITH MG(2+); GTP ANALOG AND MICAL1</scope>
    <scope>INTERACTION WITH MICAL3; EHBP1 AND EHBP1L1</scope>
    <scope>COFACTOR</scope>
</reference>
<feature type="chain" id="PRO_0000121146" description="Ras-related protein Rab-10">
    <location>
        <begin position="1"/>
        <end position="200"/>
    </location>
</feature>
<feature type="short sequence motif" description="Switch 1" evidence="5">
    <location>
        <begin position="32"/>
        <end position="46"/>
    </location>
</feature>
<feature type="short sequence motif" description="Switch 2" evidence="5">
    <location>
        <begin position="64"/>
        <end position="81"/>
    </location>
</feature>
<feature type="binding site" evidence="15 30 31">
    <location>
        <position position="18"/>
    </location>
    <ligand>
        <name>GTP</name>
        <dbReference type="ChEBI" id="CHEBI:37565"/>
    </ligand>
</feature>
<feature type="binding site" evidence="15 30">
    <location>
        <position position="19"/>
    </location>
    <ligand>
        <name>GTP</name>
        <dbReference type="ChEBI" id="CHEBI:37565"/>
    </ligand>
</feature>
<feature type="binding site" evidence="15 30">
    <location>
        <position position="20"/>
    </location>
    <ligand>
        <name>GTP</name>
        <dbReference type="ChEBI" id="CHEBI:37565"/>
    </ligand>
</feature>
<feature type="binding site" evidence="15 30 31">
    <location>
        <position position="21"/>
    </location>
    <ligand>
        <name>GTP</name>
        <dbReference type="ChEBI" id="CHEBI:37565"/>
    </ligand>
</feature>
<feature type="binding site" evidence="15 30 31">
    <location>
        <position position="22"/>
    </location>
    <ligand>
        <name>GTP</name>
        <dbReference type="ChEBI" id="CHEBI:37565"/>
    </ligand>
</feature>
<feature type="binding site" evidence="15 30 31">
    <location>
        <position position="23"/>
    </location>
    <ligand>
        <name>GTP</name>
        <dbReference type="ChEBI" id="CHEBI:37565"/>
    </ligand>
</feature>
<feature type="binding site" evidence="15 30 31">
    <location>
        <position position="23"/>
    </location>
    <ligand>
        <name>Mg(2+)</name>
        <dbReference type="ChEBI" id="CHEBI:18420"/>
    </ligand>
</feature>
<feature type="binding site" evidence="15 30 31">
    <location>
        <position position="24"/>
    </location>
    <ligand>
        <name>GTP</name>
        <dbReference type="ChEBI" id="CHEBI:37565"/>
    </ligand>
</feature>
<feature type="binding site" evidence="15 30">
    <location>
        <position position="35"/>
    </location>
    <ligand>
        <name>GTP</name>
        <dbReference type="ChEBI" id="CHEBI:37565"/>
    </ligand>
</feature>
<feature type="binding site" evidence="15 30 31">
    <location>
        <position position="36"/>
    </location>
    <ligand>
        <name>GTP</name>
        <dbReference type="ChEBI" id="CHEBI:37565"/>
    </ligand>
</feature>
<feature type="binding site" evidence="15 30 31">
    <location>
        <position position="40"/>
    </location>
    <ligand>
        <name>GTP</name>
        <dbReference type="ChEBI" id="CHEBI:37565"/>
    </ligand>
</feature>
<feature type="binding site" evidence="15 30 31">
    <location>
        <position position="41"/>
    </location>
    <ligand>
        <name>GTP</name>
        <dbReference type="ChEBI" id="CHEBI:37565"/>
    </ligand>
</feature>
<feature type="binding site" evidence="15 30 31">
    <location>
        <position position="41"/>
    </location>
    <ligand>
        <name>Mg(2+)</name>
        <dbReference type="ChEBI" id="CHEBI:18420"/>
    </ligand>
</feature>
<feature type="binding site" evidence="15 30 31">
    <location>
        <position position="64"/>
    </location>
    <ligand>
        <name>Mg(2+)</name>
        <dbReference type="ChEBI" id="CHEBI:18420"/>
    </ligand>
</feature>
<feature type="binding site" evidence="15 30 31">
    <location>
        <position position="67"/>
    </location>
    <ligand>
        <name>GTP</name>
        <dbReference type="ChEBI" id="CHEBI:37565"/>
    </ligand>
</feature>
<feature type="binding site" evidence="15 30 31">
    <location>
        <position position="122"/>
    </location>
    <ligand>
        <name>GTP</name>
        <dbReference type="ChEBI" id="CHEBI:37565"/>
    </ligand>
</feature>
<feature type="binding site" evidence="15 30 31">
    <location>
        <position position="123"/>
    </location>
    <ligand>
        <name>GTP</name>
        <dbReference type="ChEBI" id="CHEBI:37565"/>
    </ligand>
</feature>
<feature type="binding site" evidence="15 30 31">
    <location>
        <position position="125"/>
    </location>
    <ligand>
        <name>GTP</name>
        <dbReference type="ChEBI" id="CHEBI:37565"/>
    </ligand>
</feature>
<feature type="binding site" evidence="15 30">
    <location>
        <position position="126"/>
    </location>
    <ligand>
        <name>GTP</name>
        <dbReference type="ChEBI" id="CHEBI:37565"/>
    </ligand>
</feature>
<feature type="binding site" evidence="15 30">
    <location>
        <position position="152"/>
    </location>
    <ligand>
        <name>GTP</name>
        <dbReference type="ChEBI" id="CHEBI:37565"/>
    </ligand>
</feature>
<feature type="binding site" evidence="15 30 31">
    <location>
        <position position="153"/>
    </location>
    <ligand>
        <name>GTP</name>
        <dbReference type="ChEBI" id="CHEBI:37565"/>
    </ligand>
</feature>
<feature type="binding site" evidence="15 30 31">
    <location>
        <position position="154"/>
    </location>
    <ligand>
        <name>GTP</name>
        <dbReference type="ChEBI" id="CHEBI:37565"/>
    </ligand>
</feature>
<feature type="modified residue" description="Phosphothreonine; by LRRK2" evidence="14 17 18 19 20 21 22 23 26">
    <location>
        <position position="73"/>
    </location>
</feature>
<feature type="modified residue" description="N6-acetyllysine" evidence="32">
    <location>
        <position position="102"/>
    </location>
</feature>
<feature type="lipid moiety-binding region" description="S-geranylgeranyl cysteine" evidence="1">
    <location>
        <position position="199"/>
    </location>
</feature>
<feature type="lipid moiety-binding region" description="S-geranylgeranyl cysteine" evidence="1">
    <location>
        <position position="200"/>
    </location>
</feature>
<feature type="cross-link" description="Glycyl lysine isopeptide (Lys-Gly) (interchain with G-Cter in ubiquitin)" evidence="24">
    <location>
        <position position="102"/>
    </location>
</feature>
<feature type="cross-link" description="Glycyl lysine isopeptide (Lys-Gly) (interchain with G-Cter in ubiquitin)" evidence="24">
    <location>
        <position position="136"/>
    </location>
</feature>
<feature type="cross-link" description="Glycyl lysine isopeptide (Lys-Gly) (interchain with G-Cter in ubiquitin)" evidence="24">
    <location>
        <position position="154"/>
    </location>
</feature>
<feature type="mutagenesis site" description="Probable dominant negative mutant locked in the inactive GDP-bound form; alters the basolateral recycling pathway in epithelial cells and endoplasmic reticulum membrane morphology. Reduces endoplasmic reticulum recruitment to the Legionella-containing vacuole. Decreased WDR44-positive tubulation. Loss of E-cadherin and MMP14 export and decreased CFTR export." evidence="8 12 24">
    <original>T</original>
    <variation>N</variation>
    <location>
        <position position="23"/>
    </location>
</feature>
<feature type="mutagenesis site" description="Probable constitutively active mutant unable to hydrolyze GTP; accumulates at the base of the primary cilium and alters the basolateral recycling pathway in epithelial cells. No effect on endoplasmic reticulum recruitment to the Legionella-containing vacuole. Increased WDR44-positive tubulation." evidence="8 24 25">
    <original>Q</original>
    <variation>L</variation>
    <location>
        <position position="68"/>
    </location>
</feature>
<feature type="mutagenesis site" description="Loss of phosphorylation. No effect on GDI1 and GDI2 binding. Increases localization to the cytosol. Does not translocate to LRRK2-positive lysosomes and does not promote lysosomal content release." evidence="14 17 21 22">
    <original>T</original>
    <variation>A</variation>
    <location>
        <position position="73"/>
    </location>
</feature>
<feature type="mutagenesis site" description="Phosphomimetic mutant. Reduces interaction with GDI1." evidence="21">
    <original>T</original>
    <variation>D</variation>
    <location>
        <position position="73"/>
    </location>
</feature>
<feature type="mutagenesis site" description="Phosphomimetic mutant. Loss of GDI1 and GDI2 binding. Increases localization to the Golgi complex." evidence="14 17 21 22">
    <original>T</original>
    <variation>E</variation>
    <location>
        <position position="73"/>
    </location>
</feature>
<feature type="sequence conflict" description="In Ref. 4; CAB66585." evidence="27" ref="4">
    <original>E</original>
    <variation>G</variation>
    <location>
        <position position="138"/>
    </location>
</feature>
<feature type="strand" evidence="34">
    <location>
        <begin position="7"/>
        <end position="15"/>
    </location>
</feature>
<feature type="helix" evidence="34">
    <location>
        <begin position="22"/>
        <end position="31"/>
    </location>
</feature>
<feature type="strand" evidence="34">
    <location>
        <begin position="43"/>
        <end position="53"/>
    </location>
</feature>
<feature type="strand" evidence="34">
    <location>
        <begin position="56"/>
        <end position="65"/>
    </location>
</feature>
<feature type="helix" evidence="33">
    <location>
        <begin position="69"/>
        <end position="71"/>
    </location>
</feature>
<feature type="helix" evidence="34">
    <location>
        <begin position="72"/>
        <end position="75"/>
    </location>
</feature>
<feature type="helix" evidence="34">
    <location>
        <begin position="76"/>
        <end position="78"/>
    </location>
</feature>
<feature type="turn" evidence="34">
    <location>
        <begin position="79"/>
        <end position="81"/>
    </location>
</feature>
<feature type="strand" evidence="34">
    <location>
        <begin position="83"/>
        <end position="90"/>
    </location>
</feature>
<feature type="helix" evidence="34">
    <location>
        <begin position="94"/>
        <end position="98"/>
    </location>
</feature>
<feature type="helix" evidence="34">
    <location>
        <begin position="100"/>
        <end position="110"/>
    </location>
</feature>
<feature type="strand" evidence="34">
    <location>
        <begin position="116"/>
        <end position="122"/>
    </location>
</feature>
<feature type="helix" evidence="34">
    <location>
        <begin position="127"/>
        <end position="129"/>
    </location>
</feature>
<feature type="helix" evidence="34">
    <location>
        <begin position="134"/>
        <end position="143"/>
    </location>
</feature>
<feature type="strand" evidence="34">
    <location>
        <begin position="147"/>
        <end position="150"/>
    </location>
</feature>
<feature type="turn" evidence="34">
    <location>
        <begin position="153"/>
        <end position="156"/>
    </location>
</feature>
<feature type="strand" evidence="34">
    <location>
        <begin position="157"/>
        <end position="159"/>
    </location>
</feature>
<feature type="helix" evidence="34">
    <location>
        <begin position="160"/>
        <end position="172"/>
    </location>
</feature>
<proteinExistence type="evidence at protein level"/>
<accession>P61026</accession>
<accession>D6W538</accession>
<accession>O88386</accession>
<accession>Q6IA52</accession>
<accession>Q9D7X6</accession>
<accession>Q9H0T3</accession>
<protein>
    <recommendedName>
        <fullName>Ras-related protein Rab-10</fullName>
        <ecNumber evidence="9">3.6.5.2</ecNumber>
    </recommendedName>
</protein>
<dbReference type="EC" id="3.6.5.2" evidence="9"/>
<dbReference type="EMBL" id="AF086917">
    <property type="protein sequence ID" value="AAP97147.1"/>
    <property type="molecule type" value="mRNA"/>
</dbReference>
<dbReference type="EMBL" id="AF297660">
    <property type="protein sequence ID" value="AAG13413.1"/>
    <property type="molecule type" value="mRNA"/>
</dbReference>
<dbReference type="EMBL" id="AF106681">
    <property type="protein sequence ID" value="AAD43034.1"/>
    <property type="molecule type" value="mRNA"/>
</dbReference>
<dbReference type="EMBL" id="AL136650">
    <property type="protein sequence ID" value="CAB66585.1"/>
    <property type="molecule type" value="mRNA"/>
</dbReference>
<dbReference type="EMBL" id="AK023223">
    <property type="protein sequence ID" value="BAB14474.1"/>
    <property type="molecule type" value="mRNA"/>
</dbReference>
<dbReference type="EMBL" id="AF498945">
    <property type="protein sequence ID" value="AAM21093.1"/>
    <property type="molecule type" value="mRNA"/>
</dbReference>
<dbReference type="EMBL" id="CR457303">
    <property type="protein sequence ID" value="CAG33584.1"/>
    <property type="molecule type" value="mRNA"/>
</dbReference>
<dbReference type="EMBL" id="CH471053">
    <property type="protein sequence ID" value="EAX00710.1"/>
    <property type="molecule type" value="Genomic_DNA"/>
</dbReference>
<dbReference type="EMBL" id="CH471053">
    <property type="protein sequence ID" value="EAX00711.1"/>
    <property type="molecule type" value="Genomic_DNA"/>
</dbReference>
<dbReference type="EMBL" id="BC000896">
    <property type="protein sequence ID" value="AAH00896.1"/>
    <property type="molecule type" value="mRNA"/>
</dbReference>
<dbReference type="CCDS" id="CCDS1720.1"/>
<dbReference type="RefSeq" id="NP_057215.3">
    <property type="nucleotide sequence ID" value="NM_016131.4"/>
</dbReference>
<dbReference type="PDB" id="5LPN">
    <property type="method" value="X-ray"/>
    <property type="resolution" value="2.80 A"/>
    <property type="chains" value="A/C=1-175"/>
</dbReference>
<dbReference type="PDB" id="5SZJ">
    <property type="method" value="X-ray"/>
    <property type="resolution" value="2.66 A"/>
    <property type="chains" value="A=1-200"/>
</dbReference>
<dbReference type="PDBsum" id="5LPN"/>
<dbReference type="PDBsum" id="5SZJ"/>
<dbReference type="SASBDB" id="P61026"/>
<dbReference type="SMR" id="P61026"/>
<dbReference type="BioGRID" id="116096">
    <property type="interactions" value="200"/>
</dbReference>
<dbReference type="FunCoup" id="P61026">
    <property type="interactions" value="2602"/>
</dbReference>
<dbReference type="IntAct" id="P61026">
    <property type="interactions" value="87"/>
</dbReference>
<dbReference type="MINT" id="P61026"/>
<dbReference type="STRING" id="9606.ENSP00000264710"/>
<dbReference type="ChEMBL" id="CHEMBL4105971"/>
<dbReference type="TCDB" id="8.A.248.1.3">
    <property type="family name" value="the ras-related rab gtpase (rrrg) family"/>
</dbReference>
<dbReference type="TCDB" id="8.A.248.1.4">
    <property type="family name" value="the ras-related rab gtpase (rrrg) family"/>
</dbReference>
<dbReference type="GlyGen" id="P61026">
    <property type="glycosylation" value="1 site, 1 O-linked glycan (1 site)"/>
</dbReference>
<dbReference type="iPTMnet" id="P61026"/>
<dbReference type="PhosphoSitePlus" id="P61026"/>
<dbReference type="SwissPalm" id="P61026"/>
<dbReference type="BioMuta" id="RAB10"/>
<dbReference type="DMDM" id="46577638"/>
<dbReference type="jPOST" id="P61026"/>
<dbReference type="MassIVE" id="P61026"/>
<dbReference type="PaxDb" id="9606-ENSP00000264710"/>
<dbReference type="PeptideAtlas" id="P61026"/>
<dbReference type="PRIDE" id="P61026"/>
<dbReference type="ProteomicsDB" id="57255"/>
<dbReference type="Pumba" id="P61026"/>
<dbReference type="TopDownProteomics" id="P61026"/>
<dbReference type="Antibodypedia" id="27788">
    <property type="antibodies" value="246 antibodies from 33 providers"/>
</dbReference>
<dbReference type="DNASU" id="10890"/>
<dbReference type="YCharOS" id="P61026">
    <property type="antibodies" value="Tested 8 antibodies from 5 manufacturers"/>
</dbReference>
<dbReference type="Ensembl" id="ENST00000264710.5">
    <property type="protein sequence ID" value="ENSP00000264710.4"/>
    <property type="gene ID" value="ENSG00000084733.11"/>
</dbReference>
<dbReference type="GeneID" id="10890"/>
<dbReference type="KEGG" id="hsa:10890"/>
<dbReference type="MANE-Select" id="ENST00000264710.5">
    <property type="protein sequence ID" value="ENSP00000264710.4"/>
    <property type="RefSeq nucleotide sequence ID" value="NM_016131.5"/>
    <property type="RefSeq protein sequence ID" value="NP_057215.3"/>
</dbReference>
<dbReference type="UCSC" id="uc002rgv.4">
    <property type="organism name" value="human"/>
</dbReference>
<dbReference type="AGR" id="HGNC:9759"/>
<dbReference type="CTD" id="10890"/>
<dbReference type="DisGeNET" id="10890"/>
<dbReference type="GeneCards" id="RAB10"/>
<dbReference type="HGNC" id="HGNC:9759">
    <property type="gene designation" value="RAB10"/>
</dbReference>
<dbReference type="HPA" id="ENSG00000084733">
    <property type="expression patterns" value="Low tissue specificity"/>
</dbReference>
<dbReference type="MIM" id="612672">
    <property type="type" value="gene"/>
</dbReference>
<dbReference type="neXtProt" id="NX_P61026"/>
<dbReference type="OpenTargets" id="ENSG00000084733"/>
<dbReference type="PharmGKB" id="PA34100"/>
<dbReference type="VEuPathDB" id="HostDB:ENSG00000084733"/>
<dbReference type="eggNOG" id="KOG0078">
    <property type="taxonomic scope" value="Eukaryota"/>
</dbReference>
<dbReference type="GeneTree" id="ENSGT00940000156975"/>
<dbReference type="HOGENOM" id="CLU_041217_23_1_1"/>
<dbReference type="InParanoid" id="P61026"/>
<dbReference type="OMA" id="ENIRTWF"/>
<dbReference type="OrthoDB" id="9989112at2759"/>
<dbReference type="PAN-GO" id="P61026">
    <property type="GO annotations" value="11 GO annotations based on evolutionary models"/>
</dbReference>
<dbReference type="PhylomeDB" id="P61026"/>
<dbReference type="TreeFam" id="TF314097"/>
<dbReference type="PathwayCommons" id="P61026"/>
<dbReference type="Reactome" id="R-HSA-1445148">
    <property type="pathway name" value="Translocation of SLC2A4 (GLUT4) to the plasma membrane"/>
</dbReference>
<dbReference type="Reactome" id="R-HSA-6798695">
    <property type="pathway name" value="Neutrophil degranulation"/>
</dbReference>
<dbReference type="Reactome" id="R-HSA-8873719">
    <property type="pathway name" value="RAB geranylgeranylation"/>
</dbReference>
<dbReference type="Reactome" id="R-HSA-8876198">
    <property type="pathway name" value="RAB GEFs exchange GTP for GDP on RABs"/>
</dbReference>
<dbReference type="SignaLink" id="P61026"/>
<dbReference type="SIGNOR" id="P61026"/>
<dbReference type="BioGRID-ORCS" id="10890">
    <property type="hits" value="327 hits in 1178 CRISPR screens"/>
</dbReference>
<dbReference type="ChiTaRS" id="RAB10">
    <property type="organism name" value="human"/>
</dbReference>
<dbReference type="GeneWiki" id="RAB10"/>
<dbReference type="GenomeRNAi" id="10890"/>
<dbReference type="Pharos" id="P61026">
    <property type="development level" value="Tbio"/>
</dbReference>
<dbReference type="PRO" id="PR:P61026"/>
<dbReference type="Proteomes" id="UP000005640">
    <property type="component" value="Chromosome 2"/>
</dbReference>
<dbReference type="RNAct" id="P61026">
    <property type="molecule type" value="protein"/>
</dbReference>
<dbReference type="Bgee" id="ENSG00000084733">
    <property type="expression patterns" value="Expressed in epithelial cell of pancreas and 194 other cell types or tissues"/>
</dbReference>
<dbReference type="GO" id="GO:0005912">
    <property type="term" value="C:adherens junction"/>
    <property type="evidence" value="ECO:0007005"/>
    <property type="project" value="BHF-UCL"/>
</dbReference>
<dbReference type="GO" id="GO:0005929">
    <property type="term" value="C:cilium"/>
    <property type="evidence" value="ECO:0000314"/>
    <property type="project" value="UniProtKB"/>
</dbReference>
<dbReference type="GO" id="GO:0030659">
    <property type="term" value="C:cytoplasmic vesicle membrane"/>
    <property type="evidence" value="ECO:0000304"/>
    <property type="project" value="Reactome"/>
</dbReference>
<dbReference type="GO" id="GO:0005856">
    <property type="term" value="C:cytoskeleton"/>
    <property type="evidence" value="ECO:0007669"/>
    <property type="project" value="UniProtKB-KW"/>
</dbReference>
<dbReference type="GO" id="GO:0005829">
    <property type="term" value="C:cytosol"/>
    <property type="evidence" value="ECO:0000304"/>
    <property type="project" value="Reactome"/>
</dbReference>
<dbReference type="GO" id="GO:0005789">
    <property type="term" value="C:endoplasmic reticulum membrane"/>
    <property type="evidence" value="ECO:0000314"/>
    <property type="project" value="UniProtKB"/>
</dbReference>
<dbReference type="GO" id="GO:0071782">
    <property type="term" value="C:endoplasmic reticulum tubular network"/>
    <property type="evidence" value="ECO:0000314"/>
    <property type="project" value="UniProtKB"/>
</dbReference>
<dbReference type="GO" id="GO:0005768">
    <property type="term" value="C:endosome"/>
    <property type="evidence" value="ECO:0000314"/>
    <property type="project" value="UniProtKB"/>
</dbReference>
<dbReference type="GO" id="GO:0010008">
    <property type="term" value="C:endosome membrane"/>
    <property type="evidence" value="ECO:0000314"/>
    <property type="project" value="UniProtKB"/>
</dbReference>
<dbReference type="GO" id="GO:0070382">
    <property type="term" value="C:exocytic vesicle"/>
    <property type="evidence" value="ECO:0000314"/>
    <property type="project" value="CAFA"/>
</dbReference>
<dbReference type="GO" id="GO:0070062">
    <property type="term" value="C:extracellular exosome"/>
    <property type="evidence" value="ECO:0007005"/>
    <property type="project" value="UniProtKB"/>
</dbReference>
<dbReference type="GO" id="GO:0005925">
    <property type="term" value="C:focal adhesion"/>
    <property type="evidence" value="ECO:0007005"/>
    <property type="project" value="UniProtKB"/>
</dbReference>
<dbReference type="GO" id="GO:0005794">
    <property type="term" value="C:Golgi apparatus"/>
    <property type="evidence" value="ECO:0000314"/>
    <property type="project" value="UniProtKB"/>
</dbReference>
<dbReference type="GO" id="GO:0000139">
    <property type="term" value="C:Golgi membrane"/>
    <property type="evidence" value="ECO:0007669"/>
    <property type="project" value="UniProtKB-SubCell"/>
</dbReference>
<dbReference type="GO" id="GO:0032593">
    <property type="term" value="C:insulin-responsive compartment"/>
    <property type="evidence" value="ECO:0000314"/>
    <property type="project" value="UniProtKB"/>
</dbReference>
<dbReference type="GO" id="GO:0005764">
    <property type="term" value="C:lysosome"/>
    <property type="evidence" value="ECO:0007669"/>
    <property type="project" value="UniProtKB-SubCell"/>
</dbReference>
<dbReference type="GO" id="GO:0016020">
    <property type="term" value="C:membrane"/>
    <property type="evidence" value="ECO:0000318"/>
    <property type="project" value="GO_Central"/>
</dbReference>
<dbReference type="GO" id="GO:0048471">
    <property type="term" value="C:perinuclear region of cytoplasm"/>
    <property type="evidence" value="ECO:0000250"/>
    <property type="project" value="UniProtKB"/>
</dbReference>
<dbReference type="GO" id="GO:0030670">
    <property type="term" value="C:phagocytic vesicle membrane"/>
    <property type="evidence" value="ECO:0007669"/>
    <property type="project" value="UniProtKB-SubCell"/>
</dbReference>
<dbReference type="GO" id="GO:0005886">
    <property type="term" value="C:plasma membrane"/>
    <property type="evidence" value="ECO:0000304"/>
    <property type="project" value="Reactome"/>
</dbReference>
<dbReference type="GO" id="GO:0055037">
    <property type="term" value="C:recycling endosome"/>
    <property type="evidence" value="ECO:0000314"/>
    <property type="project" value="UniProtKB"/>
</dbReference>
<dbReference type="GO" id="GO:0055038">
    <property type="term" value="C:recycling endosome membrane"/>
    <property type="evidence" value="ECO:0007669"/>
    <property type="project" value="UniProtKB-SubCell"/>
</dbReference>
<dbReference type="GO" id="GO:0030667">
    <property type="term" value="C:secretory granule membrane"/>
    <property type="evidence" value="ECO:0000304"/>
    <property type="project" value="Reactome"/>
</dbReference>
<dbReference type="GO" id="GO:0099503">
    <property type="term" value="C:secretory vesicle"/>
    <property type="evidence" value="ECO:0000318"/>
    <property type="project" value="GO_Central"/>
</dbReference>
<dbReference type="GO" id="GO:0005802">
    <property type="term" value="C:trans-Golgi network"/>
    <property type="evidence" value="ECO:0000250"/>
    <property type="project" value="UniProtKB"/>
</dbReference>
<dbReference type="GO" id="GO:0098641">
    <property type="term" value="F:cadherin binding involved in cell-cell adhesion"/>
    <property type="evidence" value="ECO:0007005"/>
    <property type="project" value="BHF-UCL"/>
</dbReference>
<dbReference type="GO" id="GO:0003925">
    <property type="term" value="F:G protein activity"/>
    <property type="evidence" value="ECO:0007669"/>
    <property type="project" value="UniProtKB-EC"/>
</dbReference>
<dbReference type="GO" id="GO:0019003">
    <property type="term" value="F:GDP binding"/>
    <property type="evidence" value="ECO:0000314"/>
    <property type="project" value="UniProtKB"/>
</dbReference>
<dbReference type="GO" id="GO:0005525">
    <property type="term" value="F:GTP binding"/>
    <property type="evidence" value="ECO:0000314"/>
    <property type="project" value="UniProtKB"/>
</dbReference>
<dbReference type="GO" id="GO:0031489">
    <property type="term" value="F:myosin V binding"/>
    <property type="evidence" value="ECO:0000353"/>
    <property type="project" value="UniProtKB"/>
</dbReference>
<dbReference type="GO" id="GO:0019882">
    <property type="term" value="P:antigen processing and presentation"/>
    <property type="evidence" value="ECO:0000315"/>
    <property type="project" value="UniProtKB"/>
</dbReference>
<dbReference type="GO" id="GO:0007409">
    <property type="term" value="P:axonogenesis"/>
    <property type="evidence" value="ECO:0000250"/>
    <property type="project" value="UniProtKB"/>
</dbReference>
<dbReference type="GO" id="GO:0032869">
    <property type="term" value="P:cellular response to insulin stimulus"/>
    <property type="evidence" value="ECO:0000250"/>
    <property type="project" value="UniProtKB"/>
</dbReference>
<dbReference type="GO" id="GO:0071786">
    <property type="term" value="P:endoplasmic reticulum tubular network organization"/>
    <property type="evidence" value="ECO:0000315"/>
    <property type="project" value="UniProtKB"/>
</dbReference>
<dbReference type="GO" id="GO:0016197">
    <property type="term" value="P:endosomal transport"/>
    <property type="evidence" value="ECO:0000315"/>
    <property type="project" value="UniProtKB"/>
</dbReference>
<dbReference type="GO" id="GO:0045200">
    <property type="term" value="P:establishment of neuroblast polarity"/>
    <property type="evidence" value="ECO:0000250"/>
    <property type="project" value="UniProtKB"/>
</dbReference>
<dbReference type="GO" id="GO:0097051">
    <property type="term" value="P:establishment of protein localization to endoplasmic reticulum membrane"/>
    <property type="evidence" value="ECO:0000315"/>
    <property type="project" value="UniProtKB"/>
</dbReference>
<dbReference type="GO" id="GO:0090150">
    <property type="term" value="P:establishment of protein localization to membrane"/>
    <property type="evidence" value="ECO:0000315"/>
    <property type="project" value="UniProtKB"/>
</dbReference>
<dbReference type="GO" id="GO:0006887">
    <property type="term" value="P:exocytosis"/>
    <property type="evidence" value="ECO:0000318"/>
    <property type="project" value="GO_Central"/>
</dbReference>
<dbReference type="GO" id="GO:0043001">
    <property type="term" value="P:Golgi to plasma membrane protein transport"/>
    <property type="evidence" value="ECO:0000250"/>
    <property type="project" value="UniProtKB"/>
</dbReference>
<dbReference type="GO" id="GO:0006893">
    <property type="term" value="P:Golgi to plasma membrane transport"/>
    <property type="evidence" value="ECO:0000250"/>
    <property type="project" value="UniProtKB"/>
</dbReference>
<dbReference type="GO" id="GO:0030859">
    <property type="term" value="P:polarized epithelial cell differentiation"/>
    <property type="evidence" value="ECO:0000250"/>
    <property type="project" value="UniProtKB"/>
</dbReference>
<dbReference type="GO" id="GO:1903361">
    <property type="term" value="P:protein localization to basolateral plasma membrane"/>
    <property type="evidence" value="ECO:0000250"/>
    <property type="project" value="UniProtKB"/>
</dbReference>
<dbReference type="GO" id="GO:0072659">
    <property type="term" value="P:protein localization to plasma membrane"/>
    <property type="evidence" value="ECO:0000250"/>
    <property type="project" value="UniProtKB"/>
</dbReference>
<dbReference type="GO" id="GO:0045055">
    <property type="term" value="P:regulated exocytosis"/>
    <property type="evidence" value="ECO:0000315"/>
    <property type="project" value="UniProtKB"/>
</dbReference>
<dbReference type="GO" id="GO:0016192">
    <property type="term" value="P:vesicle-mediated transport"/>
    <property type="evidence" value="ECO:0000250"/>
    <property type="project" value="UniProtKB"/>
</dbReference>
<dbReference type="CDD" id="cd01867">
    <property type="entry name" value="Rab8_Rab10_Rab13_like"/>
    <property type="match status" value="1"/>
</dbReference>
<dbReference type="FunFam" id="3.40.50.300:FF:000202">
    <property type="entry name" value="ras-related protein Rab-8A"/>
    <property type="match status" value="1"/>
</dbReference>
<dbReference type="Gene3D" id="3.40.50.300">
    <property type="entry name" value="P-loop containing nucleotide triphosphate hydrolases"/>
    <property type="match status" value="1"/>
</dbReference>
<dbReference type="InterPro" id="IPR027417">
    <property type="entry name" value="P-loop_NTPase"/>
</dbReference>
<dbReference type="InterPro" id="IPR005225">
    <property type="entry name" value="Small_GTP-bd"/>
</dbReference>
<dbReference type="InterPro" id="IPR001806">
    <property type="entry name" value="Small_GTPase"/>
</dbReference>
<dbReference type="InterPro" id="IPR050305">
    <property type="entry name" value="Small_GTPase_Rab"/>
</dbReference>
<dbReference type="NCBIfam" id="TIGR00231">
    <property type="entry name" value="small_GTP"/>
    <property type="match status" value="1"/>
</dbReference>
<dbReference type="PANTHER" id="PTHR47980">
    <property type="entry name" value="LD44762P"/>
    <property type="match status" value="1"/>
</dbReference>
<dbReference type="Pfam" id="PF00071">
    <property type="entry name" value="Ras"/>
    <property type="match status" value="1"/>
</dbReference>
<dbReference type="PRINTS" id="PR00449">
    <property type="entry name" value="RASTRNSFRMNG"/>
</dbReference>
<dbReference type="SMART" id="SM00177">
    <property type="entry name" value="ARF"/>
    <property type="match status" value="1"/>
</dbReference>
<dbReference type="SMART" id="SM00175">
    <property type="entry name" value="RAB"/>
    <property type="match status" value="1"/>
</dbReference>
<dbReference type="SMART" id="SM00176">
    <property type="entry name" value="RAN"/>
    <property type="match status" value="1"/>
</dbReference>
<dbReference type="SMART" id="SM00173">
    <property type="entry name" value="RAS"/>
    <property type="match status" value="1"/>
</dbReference>
<dbReference type="SMART" id="SM00174">
    <property type="entry name" value="RHO"/>
    <property type="match status" value="1"/>
</dbReference>
<dbReference type="SUPFAM" id="SSF52540">
    <property type="entry name" value="P-loop containing nucleoside triphosphate hydrolases"/>
    <property type="match status" value="1"/>
</dbReference>
<dbReference type="PROSITE" id="PS51419">
    <property type="entry name" value="RAB"/>
    <property type="match status" value="1"/>
</dbReference>
<comment type="function">
    <text evidence="2 4 6 10 12 21 22 25">The small GTPases Rab are key regulators of intracellular membrane trafficking, from the formation of transport vesicles to their fusion with membranes (PubMed:21248164). Rabs cycle between an inactive GDP-bound form and an active GTP-bound form that is able to recruit to membranes different set of downstream effectors directly responsible for vesicle formation, movement, tethering and fusion (PubMed:21248164). That Rab is mainly involved in the biosynthetic transport of proteins from the Golgi to the plasma membrane (PubMed:21248164). Regulates, for instance, SLC2A4/GLUT4 glucose transporter-enriched vesicles delivery to the plasma membrane (By similarity). In parallel, it regulates the transport of TLR4, a toll-like receptor to the plasma membrane and therefore may be important for innate immune response (By similarity). Also plays a specific role in asymmetric protein transport to the plasma membrane (PubMed:16641372). In neurons, it is involved in axonogenesis through regulation of vesicular membrane trafficking toward the axonal plasma membrane (By similarity). In epithelial cells, it regulates transport from the Golgi to the basolateral membrane (PubMed:16641372). May play a role in the basolateral recycling pathway and in phagosome maturation (By similarity). May play a role in endoplasmic reticulum dynamics and morphology controlling tubulation along microtubules and tubules fusion (PubMed:23263280). Together with LRRK2, RAB8A, and RILPL1, it regulates ciliogenesis (PubMed:30398148). When phosphorylated by LRRK2 on Thr-73, binds RILPL1 and inhibits ciliogenesis (PubMed:30398148). Participates in the export of a subset of neosynthesized proteins through a Rab8-Rab10-Rab11-dependent endososomal export route (PubMed:32344433). Targeted to and stabilized on stressed lysosomes through LRRK2 phosphorylation where it promotes the extracellular release of lysosomal content through EHBP1 and EHNP1L1 effector proteins (PubMed:30209220).</text>
</comment>
<comment type="function">
    <text evidence="24">(Microbial infection) Upon Legionella pneumophila infection promotes endoplasmic reticulum recruitment and bacterial replication. Plays a role in remodeling the Legionella-containing vacuole (LCV) into an endoplasmic reticulum-like vacuole.</text>
</comment>
<comment type="catalytic activity">
    <reaction evidence="9">
        <text>GTP + H2O = GDP + phosphate + H(+)</text>
        <dbReference type="Rhea" id="RHEA:19669"/>
        <dbReference type="ChEBI" id="CHEBI:15377"/>
        <dbReference type="ChEBI" id="CHEBI:15378"/>
        <dbReference type="ChEBI" id="CHEBI:37565"/>
        <dbReference type="ChEBI" id="CHEBI:43474"/>
        <dbReference type="ChEBI" id="CHEBI:58189"/>
        <dbReference type="EC" id="3.6.5.2"/>
    </reaction>
    <physiologicalReaction direction="left-to-right" evidence="9">
        <dbReference type="Rhea" id="RHEA:19670"/>
    </physiologicalReaction>
</comment>
<comment type="cofactor">
    <cofactor evidence="15">
        <name>Mg(2+)</name>
        <dbReference type="ChEBI" id="CHEBI:18420"/>
    </cofactor>
</comment>
<comment type="activity regulation">
    <text evidence="7 9 14 17 24 28">Regulated by guanine nucleotide exchange factors (GEFs) DENND4C and RABIF which promote the exchange of bound GDP for free GTP (PubMed:20937701, PubMed:31540829). Regulated by GTPase activating proteins (GAPs) including TBC1D21 which increase the GTP hydrolysis activity (Probable). Inhibited by GDP dissociation inhibitors GDI1 and GDI2 which prevent Rab-GDP dissociation (PubMed:19570034, PubMed:26824392, PubMed:29125462).</text>
</comment>
<comment type="subunit">
    <text evidence="2 3 4 7 11 14 15 16 17 22 25">Interacts with MYO5A; mediates the transport to the plasma membrane of SLC2A4/GLUT4 storage vesicles (PubMed:22908308). Interacts with GDI1 and with GDI2; negatively regulates RAB10 association with membranes and activation (PubMed:19570034, PubMed:26824392, PubMed:29125462). Interacts (GDP-bound form) with LLGL1; the interaction is direct and promotes RAB10 association with membranes and activation through competition with the Rab inhibitor GDI1 (By similarity). Interacts with EXOC4; probably associates with the exocyst (By similarity). Interacts (GTP-bound form) with MICALCL, MICAL1, MICAL3, EHBP1 and EHBP1L1; at least in case of MICAL1 two molecules of RAB10 can bind to one molecule of MICAL1 (PubMed:27552051, PubMed:32344433). Interacts with TBC1D13 (By similarity). Interacts with SEC16A (By similarity). Interacts with CHM and CHML (PubMed:29125462). Interacts with LRRK2; interaction facilitates phosphorylation of Thr-73 (PubMed:26824392). Interacts (when phosphorylated on Thr-73) with RILPL1 and RILPL2 (PubMed:29125462, PubMed:30398148). Interacts with TBC1D21 (PubMed:28067790). Interacts with MARCKS (By similarity).</text>
</comment>
<comment type="interaction">
    <interactant intactId="EBI-726075">
        <id>P61026</id>
    </interactant>
    <interactant intactId="EBI-5323863">
        <id>Q5S007</id>
        <label>LRRK2</label>
    </interactant>
    <organismsDiffer>false</organismsDiffer>
    <experiments>7</experiments>
</comment>
<comment type="interaction">
    <interactant intactId="EBI-726075">
        <id>P61026</id>
    </interactant>
    <interactant intactId="EBI-748974">
        <id>Q96CV9</id>
        <label>OPTN</label>
    </interactant>
    <organismsDiffer>false</organismsDiffer>
    <experiments>3</experiments>
</comment>
<comment type="interaction">
    <interactant intactId="EBI-726075">
        <id>P61026</id>
    </interactant>
    <interactant intactId="EBI-8796752">
        <id>Q9ULR3</id>
        <label>PPM1H</label>
    </interactant>
    <organismsDiffer>false</organismsDiffer>
    <experiments>4</experiments>
</comment>
<comment type="interaction">
    <interactant intactId="EBI-726075">
        <id>P61026</id>
    </interactant>
    <interactant intactId="EBI-3048577">
        <id>Q14964</id>
        <label>RAB39A</label>
    </interactant>
    <organismsDiffer>false</organismsDiffer>
    <experiments>2</experiments>
</comment>
<comment type="interaction">
    <interactant intactId="EBI-726075">
        <id>P61026</id>
    </interactant>
    <interactant intactId="EBI-717552">
        <id>Q969X0</id>
        <label>RILPL2</label>
    </interactant>
    <organismsDiffer>false</organismsDiffer>
    <experiments>2</experiments>
</comment>
<comment type="subcellular location">
    <subcellularLocation>
        <location evidence="27">Cytoplasmic vesicle membrane</location>
        <topology evidence="27">Lipid-anchor</topology>
        <orientation evidence="27">Cytoplasmic side</orientation>
    </subcellularLocation>
    <subcellularLocation>
        <location evidence="12">Golgi apparatus membrane</location>
    </subcellularLocation>
    <subcellularLocation>
        <location evidence="2">Golgi apparatus</location>
        <location evidence="2">trans-Golgi network membrane</location>
    </subcellularLocation>
    <subcellularLocation>
        <location evidence="6 25">Endosome membrane</location>
    </subcellularLocation>
    <subcellularLocation>
        <location evidence="2">Recycling endosome membrane</location>
    </subcellularLocation>
    <subcellularLocation>
        <location evidence="2">Cytoplasmic vesicle</location>
        <location evidence="2">Phagosome membrane</location>
    </subcellularLocation>
    <subcellularLocation>
        <location evidence="8 22">Cytoplasm</location>
        <location evidence="8 22">Cytoskeleton</location>
        <location evidence="8 22">Cilium basal body</location>
    </subcellularLocation>
    <subcellularLocation>
        <location evidence="12 13">Endoplasmic reticulum membrane</location>
    </subcellularLocation>
    <subcellularLocation>
        <location evidence="19">Cytoplasm</location>
        <location evidence="19">Perinuclear region</location>
    </subcellularLocation>
    <subcellularLocation>
        <location evidence="21">Lysosome</location>
    </subcellularLocation>
    <text evidence="2 8 11 12 21 22 25">Associates with SLC2A4/GLUT4 storage vesicles (PubMed:22908308). Localizes to the base of the cilium when phosphorylated by LRRK2 on Thr-73 (PubMed:20576682, PubMed:30398148). Transiently associates with phagosomes (By similarity). Localizes to the endoplasmic reticulum at domains of new tubule growth (PubMed:23263280). Colocalizes with MICAL1, GRAF1/ARHGAP26 and GRAF2/ARHGAP10 on endosomal tubules (PubMed:32344433). Localizes to enlarged lysosomes through LRRK2 phosphorylation (PubMed:30209220).</text>
</comment>
<comment type="tissue specificity">
    <text evidence="16 18 20">Expressed in the hippocampus (PubMed:29562525). Expressed in neutrophils (at protein level) (PubMed:29127255). Expressed in the testis (at protein level) (PubMed:28067790).</text>
</comment>
<comment type="domain">
    <text evidence="5">Switch 1, switch 2 and the interswitch regions are characteristic of Rab GTPases and mediate the interactions with Rab downstream effectors. The switch regions undergo conformational changes upon nucleotide binding which drives interaction with specific sets of effector proteins, with most effectors only binding to GTP-bound Rab.</text>
</comment>
<comment type="PTM">
    <text evidence="24">Ubiquitinated upon Legionella pneumophila infection. Ubiquitination does not lead to proteasomal degradation.</text>
</comment>
<comment type="PTM">
    <text evidence="14 21 26">Phosphorylation of Thr-73 in the switch II region by LRRK2 prevents the association of dRAB regulatory proteins, including CHM, CHML and RAB GDP dissociation inhibitors GDI1 and GDI2 (PubMed:26824392). Phosphorylation of Thr-73 by LRRK2 is stimulated by RAB29 and RAB32 (PubMed:38127736). Phosphorylation by LRRK2 is required for localization to stressed lysosomes (PubMed:30209220).</text>
</comment>
<comment type="similarity">
    <text evidence="27">Belongs to the small GTPase superfamily. Rab family.</text>
</comment>
<organism>
    <name type="scientific">Homo sapiens</name>
    <name type="common">Human</name>
    <dbReference type="NCBI Taxonomy" id="9606"/>
    <lineage>
        <taxon>Eukaryota</taxon>
        <taxon>Metazoa</taxon>
        <taxon>Chordata</taxon>
        <taxon>Craniata</taxon>
        <taxon>Vertebrata</taxon>
        <taxon>Euteleostomi</taxon>
        <taxon>Mammalia</taxon>
        <taxon>Eutheria</taxon>
        <taxon>Euarchontoglires</taxon>
        <taxon>Primates</taxon>
        <taxon>Haplorrhini</taxon>
        <taxon>Catarrhini</taxon>
        <taxon>Hominidae</taxon>
        <taxon>Homo</taxon>
    </lineage>
</organism>
<keyword id="KW-0002">3D-structure</keyword>
<keyword id="KW-0007">Acetylation</keyword>
<keyword id="KW-0966">Cell projection</keyword>
<keyword id="KW-0963">Cytoplasm</keyword>
<keyword id="KW-0968">Cytoplasmic vesicle</keyword>
<keyword id="KW-0206">Cytoskeleton</keyword>
<keyword id="KW-0256">Endoplasmic reticulum</keyword>
<keyword id="KW-0967">Endosome</keyword>
<keyword id="KW-0333">Golgi apparatus</keyword>
<keyword id="KW-0342">GTP-binding</keyword>
<keyword id="KW-0378">Hydrolase</keyword>
<keyword id="KW-1017">Isopeptide bond</keyword>
<keyword id="KW-0449">Lipoprotein</keyword>
<keyword id="KW-0458">Lysosome</keyword>
<keyword id="KW-0472">Membrane</keyword>
<keyword id="KW-0523">Neurodegeneration</keyword>
<keyword id="KW-0547">Nucleotide-binding</keyword>
<keyword id="KW-0597">Phosphoprotein</keyword>
<keyword id="KW-0636">Prenylation</keyword>
<keyword id="KW-0653">Protein transport</keyword>
<keyword id="KW-1267">Proteomics identification</keyword>
<keyword id="KW-1185">Reference proteome</keyword>
<keyword id="KW-0813">Transport</keyword>
<keyword id="KW-0832">Ubl conjugation</keyword>
<name>RAB10_HUMAN</name>
<gene>
    <name evidence="29" type="primary">RAB10</name>
</gene>
<evidence type="ECO:0000250" key="1"/>
<evidence type="ECO:0000250" key="2">
    <source>
        <dbReference type="UniProtKB" id="P24409"/>
    </source>
</evidence>
<evidence type="ECO:0000250" key="3">
    <source>
        <dbReference type="UniProtKB" id="P35281"/>
    </source>
</evidence>
<evidence type="ECO:0000250" key="4">
    <source>
        <dbReference type="UniProtKB" id="P61027"/>
    </source>
</evidence>
<evidence type="ECO:0000250" key="5">
    <source>
        <dbReference type="UniProtKB" id="P62820"/>
    </source>
</evidence>
<evidence type="ECO:0000269" key="6">
    <source>
    </source>
</evidence>
<evidence type="ECO:0000269" key="7">
    <source>
    </source>
</evidence>
<evidence type="ECO:0000269" key="8">
    <source>
    </source>
</evidence>
<evidence type="ECO:0000269" key="9">
    <source>
    </source>
</evidence>
<evidence type="ECO:0000269" key="10">
    <source>
    </source>
</evidence>
<evidence type="ECO:0000269" key="11">
    <source>
    </source>
</evidence>
<evidence type="ECO:0000269" key="12">
    <source>
    </source>
</evidence>
<evidence type="ECO:0000269" key="13">
    <source>
    </source>
</evidence>
<evidence type="ECO:0000269" key="14">
    <source>
    </source>
</evidence>
<evidence type="ECO:0000269" key="15">
    <source>
    </source>
</evidence>
<evidence type="ECO:0000269" key="16">
    <source>
    </source>
</evidence>
<evidence type="ECO:0000269" key="17">
    <source>
    </source>
</evidence>
<evidence type="ECO:0000269" key="18">
    <source>
    </source>
</evidence>
<evidence type="ECO:0000269" key="19">
    <source>
    </source>
</evidence>
<evidence type="ECO:0000269" key="20">
    <source>
    </source>
</evidence>
<evidence type="ECO:0000269" key="21">
    <source>
    </source>
</evidence>
<evidence type="ECO:0000269" key="22">
    <source>
    </source>
</evidence>
<evidence type="ECO:0000269" key="23">
    <source>
    </source>
</evidence>
<evidence type="ECO:0000269" key="24">
    <source>
    </source>
</evidence>
<evidence type="ECO:0000269" key="25">
    <source>
    </source>
</evidence>
<evidence type="ECO:0000269" key="26">
    <source>
    </source>
</evidence>
<evidence type="ECO:0000305" key="27"/>
<evidence type="ECO:0000305" key="28">
    <source>
    </source>
</evidence>
<evidence type="ECO:0000312" key="29">
    <source>
        <dbReference type="HGNC" id="HGNC:9759"/>
    </source>
</evidence>
<evidence type="ECO:0007744" key="30">
    <source>
        <dbReference type="PDB" id="5LPN"/>
    </source>
</evidence>
<evidence type="ECO:0007744" key="31">
    <source>
        <dbReference type="PDB" id="5SZJ"/>
    </source>
</evidence>
<evidence type="ECO:0007744" key="32">
    <source>
    </source>
</evidence>
<evidence type="ECO:0007829" key="33">
    <source>
        <dbReference type="PDB" id="5LPN"/>
    </source>
</evidence>
<evidence type="ECO:0007829" key="34">
    <source>
        <dbReference type="PDB" id="5SZJ"/>
    </source>
</evidence>